<sequence length="211" mass="23323">MSLSDIQQAILSLITNNINADGVSPSQTEIARAFGFKGVRAVQHHLDVLEQQGMIRRIPGQARGIRLKHLTEVDEVALALQSKDVLRLPVLGRVAAGQPIGADIGEDHVVLLDRVFFSPAPDYLLRVQGDSMRDEGIFDGDLIGVHRTQDAHSGQIVVARIDDEITVKLLKISKDRIRLLPRNPDFAPIEVRSDQDFAIEGLYCGLLRPNR</sequence>
<gene>
    <name evidence="1" type="primary">lexA</name>
    <name type="ordered locus">XfasM23_0085</name>
</gene>
<organism>
    <name type="scientific">Xylella fastidiosa (strain M23)</name>
    <dbReference type="NCBI Taxonomy" id="405441"/>
    <lineage>
        <taxon>Bacteria</taxon>
        <taxon>Pseudomonadati</taxon>
        <taxon>Pseudomonadota</taxon>
        <taxon>Gammaproteobacteria</taxon>
        <taxon>Lysobacterales</taxon>
        <taxon>Lysobacteraceae</taxon>
        <taxon>Xylella</taxon>
    </lineage>
</organism>
<name>LEXA_XYLF2</name>
<accession>B2I679</accession>
<protein>
    <recommendedName>
        <fullName evidence="1">LexA repressor</fullName>
        <ecNumber evidence="1">3.4.21.88</ecNumber>
    </recommendedName>
</protein>
<evidence type="ECO:0000255" key="1">
    <source>
        <dbReference type="HAMAP-Rule" id="MF_00015"/>
    </source>
</evidence>
<keyword id="KW-0068">Autocatalytic cleavage</keyword>
<keyword id="KW-0227">DNA damage</keyword>
<keyword id="KW-0234">DNA repair</keyword>
<keyword id="KW-0235">DNA replication</keyword>
<keyword id="KW-0238">DNA-binding</keyword>
<keyword id="KW-0378">Hydrolase</keyword>
<keyword id="KW-0678">Repressor</keyword>
<keyword id="KW-0742">SOS response</keyword>
<keyword id="KW-0804">Transcription</keyword>
<keyword id="KW-0805">Transcription regulation</keyword>
<reference key="1">
    <citation type="journal article" date="2010" name="J. Bacteriol.">
        <title>Whole genome sequences of two Xylella fastidiosa strains (M12 and M23) causing almond leaf scorch disease in California.</title>
        <authorList>
            <person name="Chen J."/>
            <person name="Xie G."/>
            <person name="Han S."/>
            <person name="Chertkov O."/>
            <person name="Sims D."/>
            <person name="Civerolo E.L."/>
        </authorList>
    </citation>
    <scope>NUCLEOTIDE SEQUENCE [LARGE SCALE GENOMIC DNA]</scope>
    <source>
        <strain>M23</strain>
    </source>
</reference>
<dbReference type="EC" id="3.4.21.88" evidence="1"/>
<dbReference type="EMBL" id="CP001011">
    <property type="protein sequence ID" value="ACB91542.1"/>
    <property type="molecule type" value="Genomic_DNA"/>
</dbReference>
<dbReference type="RefSeq" id="WP_004087617.1">
    <property type="nucleotide sequence ID" value="NC_010577.1"/>
</dbReference>
<dbReference type="SMR" id="B2I679"/>
<dbReference type="MEROPS" id="S24.001"/>
<dbReference type="GeneID" id="93903783"/>
<dbReference type="KEGG" id="xfn:XfasM23_0085"/>
<dbReference type="HOGENOM" id="CLU_066192_45_3_6"/>
<dbReference type="Proteomes" id="UP000001698">
    <property type="component" value="Chromosome"/>
</dbReference>
<dbReference type="GO" id="GO:0003677">
    <property type="term" value="F:DNA binding"/>
    <property type="evidence" value="ECO:0007669"/>
    <property type="project" value="UniProtKB-UniRule"/>
</dbReference>
<dbReference type="GO" id="GO:0004252">
    <property type="term" value="F:serine-type endopeptidase activity"/>
    <property type="evidence" value="ECO:0007669"/>
    <property type="project" value="UniProtKB-UniRule"/>
</dbReference>
<dbReference type="GO" id="GO:0006281">
    <property type="term" value="P:DNA repair"/>
    <property type="evidence" value="ECO:0007669"/>
    <property type="project" value="UniProtKB-UniRule"/>
</dbReference>
<dbReference type="GO" id="GO:0006260">
    <property type="term" value="P:DNA replication"/>
    <property type="evidence" value="ECO:0007669"/>
    <property type="project" value="UniProtKB-UniRule"/>
</dbReference>
<dbReference type="GO" id="GO:0045892">
    <property type="term" value="P:negative regulation of DNA-templated transcription"/>
    <property type="evidence" value="ECO:0007669"/>
    <property type="project" value="UniProtKB-UniRule"/>
</dbReference>
<dbReference type="GO" id="GO:0006508">
    <property type="term" value="P:proteolysis"/>
    <property type="evidence" value="ECO:0007669"/>
    <property type="project" value="InterPro"/>
</dbReference>
<dbReference type="GO" id="GO:0009432">
    <property type="term" value="P:SOS response"/>
    <property type="evidence" value="ECO:0007669"/>
    <property type="project" value="UniProtKB-UniRule"/>
</dbReference>
<dbReference type="CDD" id="cd06529">
    <property type="entry name" value="S24_LexA-like"/>
    <property type="match status" value="1"/>
</dbReference>
<dbReference type="FunFam" id="1.10.10.10:FF:000009">
    <property type="entry name" value="LexA repressor"/>
    <property type="match status" value="1"/>
</dbReference>
<dbReference type="FunFam" id="2.10.109.10:FF:000001">
    <property type="entry name" value="LexA repressor"/>
    <property type="match status" value="1"/>
</dbReference>
<dbReference type="Gene3D" id="2.10.109.10">
    <property type="entry name" value="Umud Fragment, subunit A"/>
    <property type="match status" value="1"/>
</dbReference>
<dbReference type="Gene3D" id="1.10.10.10">
    <property type="entry name" value="Winged helix-like DNA-binding domain superfamily/Winged helix DNA-binding domain"/>
    <property type="match status" value="1"/>
</dbReference>
<dbReference type="HAMAP" id="MF_00015">
    <property type="entry name" value="LexA"/>
    <property type="match status" value="1"/>
</dbReference>
<dbReference type="InterPro" id="IPR006200">
    <property type="entry name" value="LexA"/>
</dbReference>
<dbReference type="InterPro" id="IPR039418">
    <property type="entry name" value="LexA-like"/>
</dbReference>
<dbReference type="InterPro" id="IPR036286">
    <property type="entry name" value="LexA/Signal_pep-like_sf"/>
</dbReference>
<dbReference type="InterPro" id="IPR006199">
    <property type="entry name" value="LexA_DNA-bd_dom"/>
</dbReference>
<dbReference type="InterPro" id="IPR050077">
    <property type="entry name" value="LexA_repressor"/>
</dbReference>
<dbReference type="InterPro" id="IPR006197">
    <property type="entry name" value="Peptidase_S24_LexA"/>
</dbReference>
<dbReference type="InterPro" id="IPR015927">
    <property type="entry name" value="Peptidase_S24_S26A/B/C"/>
</dbReference>
<dbReference type="InterPro" id="IPR036388">
    <property type="entry name" value="WH-like_DNA-bd_sf"/>
</dbReference>
<dbReference type="InterPro" id="IPR036390">
    <property type="entry name" value="WH_DNA-bd_sf"/>
</dbReference>
<dbReference type="NCBIfam" id="TIGR00498">
    <property type="entry name" value="lexA"/>
    <property type="match status" value="1"/>
</dbReference>
<dbReference type="PANTHER" id="PTHR33516">
    <property type="entry name" value="LEXA REPRESSOR"/>
    <property type="match status" value="1"/>
</dbReference>
<dbReference type="PANTHER" id="PTHR33516:SF2">
    <property type="entry name" value="LEXA REPRESSOR-RELATED"/>
    <property type="match status" value="1"/>
</dbReference>
<dbReference type="Pfam" id="PF01726">
    <property type="entry name" value="LexA_DNA_bind"/>
    <property type="match status" value="1"/>
</dbReference>
<dbReference type="Pfam" id="PF00717">
    <property type="entry name" value="Peptidase_S24"/>
    <property type="match status" value="1"/>
</dbReference>
<dbReference type="PRINTS" id="PR00726">
    <property type="entry name" value="LEXASERPTASE"/>
</dbReference>
<dbReference type="SUPFAM" id="SSF51306">
    <property type="entry name" value="LexA/Signal peptidase"/>
    <property type="match status" value="1"/>
</dbReference>
<dbReference type="SUPFAM" id="SSF46785">
    <property type="entry name" value="Winged helix' DNA-binding domain"/>
    <property type="match status" value="1"/>
</dbReference>
<feature type="chain" id="PRO_1000089604" description="LexA repressor">
    <location>
        <begin position="1"/>
        <end position="211"/>
    </location>
</feature>
<feature type="DNA-binding region" description="H-T-H motif" evidence="1">
    <location>
        <begin position="27"/>
        <end position="47"/>
    </location>
</feature>
<feature type="active site" description="For autocatalytic cleavage activity" evidence="1">
    <location>
        <position position="131"/>
    </location>
</feature>
<feature type="active site" description="For autocatalytic cleavage activity" evidence="1">
    <location>
        <position position="168"/>
    </location>
</feature>
<feature type="site" description="Cleavage; by autolysis" evidence="1">
    <location>
        <begin position="96"/>
        <end position="97"/>
    </location>
</feature>
<comment type="function">
    <text evidence="1">Represses a number of genes involved in the response to DNA damage (SOS response), including recA and lexA. In the presence of single-stranded DNA, RecA interacts with LexA causing an autocatalytic cleavage which disrupts the DNA-binding part of LexA, leading to derepression of the SOS regulon and eventually DNA repair.</text>
</comment>
<comment type="catalytic activity">
    <reaction evidence="1">
        <text>Hydrolysis of Ala-|-Gly bond in repressor LexA.</text>
        <dbReference type="EC" id="3.4.21.88"/>
    </reaction>
</comment>
<comment type="subunit">
    <text evidence="1">Homodimer.</text>
</comment>
<comment type="similarity">
    <text evidence="1">Belongs to the peptidase S24 family.</text>
</comment>
<proteinExistence type="inferred from homology"/>